<keyword id="KW-1003">Cell membrane</keyword>
<keyword id="KW-1015">Disulfide bond</keyword>
<keyword id="KW-0297">G-protein coupled receptor</keyword>
<keyword id="KW-0325">Glycoprotein</keyword>
<keyword id="KW-0472">Membrane</keyword>
<keyword id="KW-0552">Olfaction</keyword>
<keyword id="KW-0675">Receptor</keyword>
<keyword id="KW-1185">Reference proteome</keyword>
<keyword id="KW-0716">Sensory transduction</keyword>
<keyword id="KW-0807">Transducer</keyword>
<keyword id="KW-0812">Transmembrane</keyword>
<keyword id="KW-1133">Transmembrane helix</keyword>
<protein>
    <recommendedName>
        <fullName>Olfactory receptor 51B6</fullName>
    </recommendedName>
    <alternativeName>
        <fullName>Odorant receptor HOR5'beta6</fullName>
    </alternativeName>
</protein>
<organism>
    <name type="scientific">Homo sapiens</name>
    <name type="common">Human</name>
    <dbReference type="NCBI Taxonomy" id="9606"/>
    <lineage>
        <taxon>Eukaryota</taxon>
        <taxon>Metazoa</taxon>
        <taxon>Chordata</taxon>
        <taxon>Craniata</taxon>
        <taxon>Vertebrata</taxon>
        <taxon>Euteleostomi</taxon>
        <taxon>Mammalia</taxon>
        <taxon>Eutheria</taxon>
        <taxon>Euarchontoglires</taxon>
        <taxon>Primates</taxon>
        <taxon>Haplorrhini</taxon>
        <taxon>Catarrhini</taxon>
        <taxon>Hominidae</taxon>
        <taxon>Homo</taxon>
    </lineage>
</organism>
<accession>Q9H340</accession>
<reference key="1">
    <citation type="journal article" date="2000" name="Proc. Natl. Acad. Sci. U.S.A.">
        <title>Comparative structural and functional analysis of the olfactory receptor genes flanking the human and mouse beta-globin gene clusters.</title>
        <authorList>
            <person name="Bulger M."/>
            <person name="Bender M.A."/>
            <person name="van Doorninck J.H."/>
            <person name="Wertman B."/>
            <person name="Farrell C.M."/>
            <person name="Felsenfeld G."/>
            <person name="Groudine M."/>
            <person name="Hardison R."/>
        </authorList>
    </citation>
    <scope>NUCLEOTIDE SEQUENCE [GENOMIC DNA]</scope>
    <scope>VARIANTS THR-5; SER-40; THR-90; ILE-131; GLY-145; ALA-169; PHE-172; LEU-192 AND ARG-275</scope>
</reference>
<reference key="2">
    <citation type="journal article" date="2006" name="Nature">
        <title>Human chromosome 11 DNA sequence and analysis including novel gene identification.</title>
        <authorList>
            <person name="Taylor T.D."/>
            <person name="Noguchi H."/>
            <person name="Totoki Y."/>
            <person name="Toyoda A."/>
            <person name="Kuroki Y."/>
            <person name="Dewar K."/>
            <person name="Lloyd C."/>
            <person name="Itoh T."/>
            <person name="Takeda T."/>
            <person name="Kim D.-W."/>
            <person name="She X."/>
            <person name="Barlow K.F."/>
            <person name="Bloom T."/>
            <person name="Bruford E."/>
            <person name="Chang J.L."/>
            <person name="Cuomo C.A."/>
            <person name="Eichler E."/>
            <person name="FitzGerald M.G."/>
            <person name="Jaffe D.B."/>
            <person name="LaButti K."/>
            <person name="Nicol R."/>
            <person name="Park H.-S."/>
            <person name="Seaman C."/>
            <person name="Sougnez C."/>
            <person name="Yang X."/>
            <person name="Zimmer A.R."/>
            <person name="Zody M.C."/>
            <person name="Birren B.W."/>
            <person name="Nusbaum C."/>
            <person name="Fujiyama A."/>
            <person name="Hattori M."/>
            <person name="Rogers J."/>
            <person name="Lander E.S."/>
            <person name="Sakaki Y."/>
        </authorList>
    </citation>
    <scope>NUCLEOTIDE SEQUENCE [LARGE SCALE GENOMIC DNA]</scope>
</reference>
<comment type="function">
    <text evidence="4">Odorant receptor.</text>
</comment>
<comment type="subcellular location">
    <subcellularLocation>
        <location>Cell membrane</location>
        <topology>Multi-pass membrane protein</topology>
    </subcellularLocation>
</comment>
<comment type="similarity">
    <text evidence="2">Belongs to the G-protein coupled receptor 1 family.</text>
</comment>
<comment type="online information" name="Human Olfactory Receptor Data Exploratorium (HORDE)">
    <link uri="http://genome.weizmann.ac.il/horde/card/index/symbol:OR51B6"/>
</comment>
<proteinExistence type="inferred from homology"/>
<feature type="chain" id="PRO_0000150748" description="Olfactory receptor 51B6">
    <location>
        <begin position="1"/>
        <end position="312"/>
    </location>
</feature>
<feature type="topological domain" description="Extracellular" evidence="1">
    <location>
        <begin position="1"/>
        <end position="23"/>
    </location>
</feature>
<feature type="transmembrane region" description="Helical; Name=1" evidence="1">
    <location>
        <begin position="24"/>
        <end position="44"/>
    </location>
</feature>
<feature type="topological domain" description="Cytoplasmic" evidence="1">
    <location>
        <begin position="45"/>
        <end position="52"/>
    </location>
</feature>
<feature type="transmembrane region" description="Helical; Name=2" evidence="1">
    <location>
        <begin position="53"/>
        <end position="73"/>
    </location>
</feature>
<feature type="topological domain" description="Extracellular" evidence="1">
    <location>
        <begin position="74"/>
        <end position="97"/>
    </location>
</feature>
<feature type="transmembrane region" description="Helical; Name=3" evidence="1">
    <location>
        <begin position="98"/>
        <end position="118"/>
    </location>
</feature>
<feature type="topological domain" description="Cytoplasmic" evidence="1">
    <location>
        <begin position="119"/>
        <end position="137"/>
    </location>
</feature>
<feature type="transmembrane region" description="Helical; Name=4" evidence="1">
    <location>
        <begin position="138"/>
        <end position="158"/>
    </location>
</feature>
<feature type="topological domain" description="Extracellular" evidence="1">
    <location>
        <begin position="159"/>
        <end position="194"/>
    </location>
</feature>
<feature type="transmembrane region" description="Helical; Name=5" evidence="1">
    <location>
        <begin position="195"/>
        <end position="215"/>
    </location>
</feature>
<feature type="topological domain" description="Cytoplasmic" evidence="1">
    <location>
        <begin position="216"/>
        <end position="235"/>
    </location>
</feature>
<feature type="transmembrane region" description="Helical; Name=6" evidence="1">
    <location>
        <begin position="236"/>
        <end position="256"/>
    </location>
</feature>
<feature type="topological domain" description="Extracellular" evidence="1">
    <location>
        <begin position="257"/>
        <end position="271"/>
    </location>
</feature>
<feature type="transmembrane region" description="Helical; Name=7" evidence="1">
    <location>
        <begin position="272"/>
        <end position="292"/>
    </location>
</feature>
<feature type="topological domain" description="Cytoplasmic" evidence="1">
    <location>
        <begin position="293"/>
        <end position="312"/>
    </location>
</feature>
<feature type="glycosylation site" description="N-linked (GlcNAc...) asparagine" evidence="1">
    <location>
        <position position="4"/>
    </location>
</feature>
<feature type="disulfide bond" evidence="2">
    <location>
        <begin position="95"/>
        <end position="187"/>
    </location>
</feature>
<feature type="sequence variant" id="VAR_053312" description="In dbSNP:rs4910755." evidence="3">
    <original>K</original>
    <variation>T</variation>
    <location>
        <position position="5"/>
    </location>
</feature>
<feature type="sequence variant" id="VAR_053313" description="In dbSNP:rs4910756." evidence="3">
    <original>N</original>
    <variation>S</variation>
    <location>
        <position position="40"/>
    </location>
</feature>
<feature type="sequence variant" id="VAR_053314" description="In dbSNP:rs7483122." evidence="3">
    <original>I</original>
    <variation>T</variation>
    <location>
        <position position="90"/>
    </location>
</feature>
<feature type="sequence variant" id="VAR_053315" description="In dbSNP:rs5006889.">
    <original>T</original>
    <variation>A</variation>
    <location>
        <position position="123"/>
    </location>
</feature>
<feature type="sequence variant" id="VAR_060035" description="In dbSNP:rs7479477.">
    <original>R</original>
    <variation>H</variation>
    <location>
        <position position="125"/>
    </location>
</feature>
<feature type="sequence variant" id="VAR_060036" description="In dbSNP:rs5006888.">
    <original>S</original>
    <variation>N</variation>
    <location>
        <position position="126"/>
    </location>
</feature>
<feature type="sequence variant" id="VAR_053316" description="In dbSNP:rs5006887." evidence="3">
    <original>T</original>
    <variation>I</variation>
    <location>
        <position position="131"/>
    </location>
</feature>
<feature type="sequence variant" id="VAR_053317" description="In dbSNP:rs5006886." evidence="3">
    <original>R</original>
    <variation>G</variation>
    <location>
        <position position="145"/>
    </location>
</feature>
<feature type="sequence variant" id="VAR_053318" description="In dbSNP:rs5006885." evidence="3">
    <original>S</original>
    <variation>A</variation>
    <location>
        <position position="169"/>
    </location>
</feature>
<feature type="sequence variant" id="VAR_053319" description="In dbSNP:rs5006884." evidence="3">
    <original>L</original>
    <variation>F</variation>
    <location>
        <position position="172"/>
    </location>
</feature>
<feature type="sequence variant" id="VAR_053320" description="In dbSNP:rs5006883." evidence="3">
    <original>F</original>
    <variation>L</variation>
    <location>
        <position position="192"/>
    </location>
</feature>
<feature type="sequence variant" id="VAR_053321" description="In dbSNP:rs7106330.">
    <original>V</original>
    <variation>L</variation>
    <location>
        <position position="254"/>
    </location>
</feature>
<feature type="sequence variant" id="VAR_053322" description="In dbSNP:rs5024042." evidence="3">
    <original>S</original>
    <variation>R</variation>
    <location>
        <position position="275"/>
    </location>
</feature>
<feature type="sequence conflict" description="In Ref. 1; AAG41682." evidence="4" ref="1">
    <original>TIRS</original>
    <variation>AIHN</variation>
    <location>
        <begin position="123"/>
        <end position="126"/>
    </location>
</feature>
<name>O51B6_HUMAN</name>
<evidence type="ECO:0000255" key="1"/>
<evidence type="ECO:0000255" key="2">
    <source>
        <dbReference type="PROSITE-ProRule" id="PRU00521"/>
    </source>
</evidence>
<evidence type="ECO:0000269" key="3">
    <source>
    </source>
</evidence>
<evidence type="ECO:0000305" key="4"/>
<dbReference type="EMBL" id="AF137396">
    <property type="protein sequence ID" value="AAG41682.1"/>
    <property type="molecule type" value="Genomic_DNA"/>
</dbReference>
<dbReference type="EMBL" id="AC104389">
    <property type="status" value="NOT_ANNOTATED_CDS"/>
    <property type="molecule type" value="Genomic_DNA"/>
</dbReference>
<dbReference type="CCDS" id="CCDS31379.1"/>
<dbReference type="RefSeq" id="NP_001004750.1">
    <property type="nucleotide sequence ID" value="NM_001004750.1"/>
</dbReference>
<dbReference type="SMR" id="Q9H340"/>
<dbReference type="FunCoup" id="Q9H340">
    <property type="interactions" value="440"/>
</dbReference>
<dbReference type="STRING" id="9606.ENSP00000369568"/>
<dbReference type="GlyCosmos" id="Q9H340">
    <property type="glycosylation" value="1 site, No reported glycans"/>
</dbReference>
<dbReference type="GlyGen" id="Q9H340">
    <property type="glycosylation" value="1 site"/>
</dbReference>
<dbReference type="iPTMnet" id="Q9H340"/>
<dbReference type="PhosphoSitePlus" id="Q9H340"/>
<dbReference type="BioMuta" id="OR51B6"/>
<dbReference type="DMDM" id="209572656"/>
<dbReference type="PaxDb" id="9606-ENSP00000369568"/>
<dbReference type="PeptideAtlas" id="Q9H340"/>
<dbReference type="Antibodypedia" id="57755">
    <property type="antibodies" value="95 antibodies from 21 providers"/>
</dbReference>
<dbReference type="DNASU" id="390058"/>
<dbReference type="Ensembl" id="ENST00000380219.1">
    <property type="protein sequence ID" value="ENSP00000369568.1"/>
    <property type="gene ID" value="ENSG00000176239.7"/>
</dbReference>
<dbReference type="GeneID" id="390058"/>
<dbReference type="KEGG" id="hsa:390058"/>
<dbReference type="MANE-Select" id="ENST00000380219.1">
    <property type="protein sequence ID" value="ENSP00000369568.1"/>
    <property type="RefSeq nucleotide sequence ID" value="NM_001004750.1"/>
    <property type="RefSeq protein sequence ID" value="NP_001004750.1"/>
</dbReference>
<dbReference type="UCSC" id="uc010qzb.2">
    <property type="organism name" value="human"/>
</dbReference>
<dbReference type="AGR" id="HGNC:19600"/>
<dbReference type="CTD" id="390058"/>
<dbReference type="DisGeNET" id="390058"/>
<dbReference type="GeneCards" id="OR51B6"/>
<dbReference type="HGNC" id="HGNC:19600">
    <property type="gene designation" value="OR51B6"/>
</dbReference>
<dbReference type="HPA" id="ENSG00000176239">
    <property type="expression patterns" value="Not detected"/>
</dbReference>
<dbReference type="neXtProt" id="NX_Q9H340"/>
<dbReference type="OpenTargets" id="ENSG00000176239"/>
<dbReference type="PharmGKB" id="PA134989095"/>
<dbReference type="VEuPathDB" id="HostDB:ENSG00000176239"/>
<dbReference type="eggNOG" id="ENOG502RTZQ">
    <property type="taxonomic scope" value="Eukaryota"/>
</dbReference>
<dbReference type="GeneTree" id="ENSGT01130000278299"/>
<dbReference type="HOGENOM" id="CLU_012526_0_0_1"/>
<dbReference type="InParanoid" id="Q9H340"/>
<dbReference type="OMA" id="NDHNLHE"/>
<dbReference type="OrthoDB" id="9444602at2759"/>
<dbReference type="PAN-GO" id="Q9H340">
    <property type="GO annotations" value="2 GO annotations based on evolutionary models"/>
</dbReference>
<dbReference type="PhylomeDB" id="Q9H340"/>
<dbReference type="TreeFam" id="TF342735"/>
<dbReference type="PathwayCommons" id="Q9H340"/>
<dbReference type="Reactome" id="R-HSA-9752946">
    <property type="pathway name" value="Expression and translocation of olfactory receptors"/>
</dbReference>
<dbReference type="SignaLink" id="Q9H340"/>
<dbReference type="BioGRID-ORCS" id="390058">
    <property type="hits" value="9 hits in 739 CRISPR screens"/>
</dbReference>
<dbReference type="GeneWiki" id="OR51B6"/>
<dbReference type="GenomeRNAi" id="390058"/>
<dbReference type="Pharos" id="Q9H340">
    <property type="development level" value="Tdark"/>
</dbReference>
<dbReference type="PRO" id="PR:Q9H340"/>
<dbReference type="Proteomes" id="UP000005640">
    <property type="component" value="Chromosome 11"/>
</dbReference>
<dbReference type="RNAct" id="Q9H340">
    <property type="molecule type" value="protein"/>
</dbReference>
<dbReference type="Bgee" id="ENSG00000176239">
    <property type="expression patterns" value="Expressed in sural nerve and 2 other cell types or tissues"/>
</dbReference>
<dbReference type="GO" id="GO:0016020">
    <property type="term" value="C:membrane"/>
    <property type="evidence" value="ECO:0000303"/>
    <property type="project" value="UniProtKB"/>
</dbReference>
<dbReference type="GO" id="GO:0005886">
    <property type="term" value="C:plasma membrane"/>
    <property type="evidence" value="ECO:0000318"/>
    <property type="project" value="GO_Central"/>
</dbReference>
<dbReference type="GO" id="GO:0004930">
    <property type="term" value="F:G protein-coupled receptor activity"/>
    <property type="evidence" value="ECO:0007669"/>
    <property type="project" value="UniProtKB-KW"/>
</dbReference>
<dbReference type="GO" id="GO:0004984">
    <property type="term" value="F:olfactory receptor activity"/>
    <property type="evidence" value="ECO:0000318"/>
    <property type="project" value="GO_Central"/>
</dbReference>
<dbReference type="GO" id="GO:0007608">
    <property type="term" value="P:sensory perception of smell"/>
    <property type="evidence" value="ECO:0000303"/>
    <property type="project" value="UniProtKB"/>
</dbReference>
<dbReference type="CDD" id="cd15222">
    <property type="entry name" value="7tmA_OR51-like"/>
    <property type="match status" value="1"/>
</dbReference>
<dbReference type="FunFam" id="1.20.1070.10:FF:000002">
    <property type="entry name" value="Olfactory receptor"/>
    <property type="match status" value="1"/>
</dbReference>
<dbReference type="Gene3D" id="1.20.1070.10">
    <property type="entry name" value="Rhodopsin 7-helix transmembrane proteins"/>
    <property type="match status" value="1"/>
</dbReference>
<dbReference type="InterPro" id="IPR017452">
    <property type="entry name" value="GPCR_Rhodpsn_7TM"/>
</dbReference>
<dbReference type="InterPro" id="IPR000725">
    <property type="entry name" value="Olfact_rcpt"/>
</dbReference>
<dbReference type="InterPro" id="IPR050402">
    <property type="entry name" value="OR51/52/56-like"/>
</dbReference>
<dbReference type="PANTHER" id="PTHR26450:SF22">
    <property type="entry name" value="OLFACTORY RECEPTOR 51B6"/>
    <property type="match status" value="1"/>
</dbReference>
<dbReference type="PANTHER" id="PTHR26450">
    <property type="entry name" value="OLFACTORY RECEPTOR 56B1-RELATED"/>
    <property type="match status" value="1"/>
</dbReference>
<dbReference type="Pfam" id="PF13853">
    <property type="entry name" value="7tm_4"/>
    <property type="match status" value="1"/>
</dbReference>
<dbReference type="PRINTS" id="PR00245">
    <property type="entry name" value="OLFACTORYR"/>
</dbReference>
<dbReference type="SUPFAM" id="SSF81321">
    <property type="entry name" value="Family A G protein-coupled receptor-like"/>
    <property type="match status" value="1"/>
</dbReference>
<dbReference type="PROSITE" id="PS50262">
    <property type="entry name" value="G_PROTEIN_RECEP_F1_2"/>
    <property type="match status" value="1"/>
</dbReference>
<sequence>MGLNKSASTFQLTGFPGMEKAHHWIFIPLLAAYISILLGNGTLLFLIRNDHNLHEPMYYFLAMLAATDLGVTLTTMPTVLGVLWLDHREIGHGACFSQAYFIHTLSVMESGVLLAMAYDCFITIRSPLRYTSILTNTQVMKIGVRVLTRAGLSIMPIVVRLHWFPYCRSHVLSHAFCLHQDVIKLACADITFNRLYPVVVLFAMVLLDFLIIFFSYILILKTVMGIGSGGERAKALNTCVSHICCILVFYVTVVCLTFIHRFGKHVPHVVHITMSYIHFLFPPFMNPFIYSIKTKQIQSGILRLFSLPHSRA</sequence>
<gene>
    <name type="primary">OR51B6</name>
</gene>